<sequence length="410" mass="45049">MTEMTEKATTFLTSQEAPAFPADRTCPYQLPTAYSRLRDEPDALRPVTLYDGRRAWVVTKHEAARRLLADPRLSSDRLHADFPATSPRFKAFRQGSPAFIGMDPPEHGTRRRMTISEFTVKRIKGMRPDVERIVHGFIDDMLAAGPTADLVSQFALPVPSMVICHMLGVPYADHEFFQDASKRLVQAVDADSAVAARDDFERYLDGLITKLESEPGTGLLGKLVTHQLADGEIDRAELISTALLLLVAGHETTASMTSLSVITLLEHPDQHAALRADPSLVPGAVEELLRVLAIADIAGGRIATADIEIDGQLIRAGEGVIVTNSIANRDSSVFENPDRLDVHRSARHHLSFGYGVHQCLGQNLARLELEVILTVLFDRIPTLRLAVPVEQLTLRPGTTIQGVNELPVTW</sequence>
<feature type="initiator methionine" description="Removed" evidence="3">
    <location>
        <position position="1"/>
    </location>
</feature>
<feature type="chain" id="PRO_0000052214" description="Cytochrome P450 105A3">
    <location>
        <begin position="2"/>
        <end position="410"/>
    </location>
</feature>
<feature type="binding site" description="axial binding residue" evidence="1">
    <location>
        <position position="359"/>
    </location>
    <ligand>
        <name>heme</name>
        <dbReference type="ChEBI" id="CHEBI:30413"/>
    </ligand>
    <ligandPart>
        <name>Fe</name>
        <dbReference type="ChEBI" id="CHEBI:18248"/>
    </ligandPart>
</feature>
<reference key="1">
    <citation type="journal article" date="1995" name="Gene">
        <title>Cloning, characterization and expression of the gene encoding cytochrome P-450sca-2 from Streptomyces carbophilus involved in production of pravastatin, a specific HMG-CoA reductase inhibitor.</title>
        <authorList>
            <person name="Watanabe I."/>
            <person name="Nara F."/>
            <person name="Serizawa N."/>
        </authorList>
    </citation>
    <scope>NUCLEOTIDE SEQUENCE [GENOMIC DNA]</scope>
    <scope>PROTEIN SEQUENCE OF 2-21</scope>
    <source>
        <strain>SANK 62585</strain>
    </source>
</reference>
<reference key="2">
    <citation type="journal article" date="1989" name="Eur. J. Biochem.">
        <title>Purification and characterization of cytochrome P-450sca from Streptomyces carbophilus. ML-236B (compactin) induces a cytochrome P-450sca in Streptomyces carbophilus that hydroxylates ML-236B to pravastatin sodium (CS-514), a tissue-selective inhibitor of 3-hydroxy-3-methylglutaryl-coenzyme-A reductase.</title>
        <authorList>
            <person name="Matsuoka T."/>
            <person name="Miyakoshi S."/>
            <person name="Tanzawa K."/>
            <person name="Nakahara K."/>
            <person name="Hosobuchi M."/>
            <person name="Serizawa N."/>
        </authorList>
    </citation>
    <scope>FUNCTION</scope>
    <scope>INDUCTION</scope>
</reference>
<reference key="3">
    <citation type="journal article" date="1999" name="Acta Crystallogr. D">
        <title>Crystallization and preliminary X-ray diffraction analysis of cytochrome P450sca-2 from Streptomyces carbophilus involved in production of pravastatin sodium, a tissue-selective inhibitor of HMG-CoA reductase.</title>
        <authorList>
            <person name="Ito S."/>
            <person name="Matsuoka T."/>
            <person name="Watanabe I."/>
            <person name="Kagasaki T."/>
            <person name="Serizawa N."/>
            <person name="Hata T."/>
        </authorList>
    </citation>
    <scope>X-RAY CRYSTALLOGRAPHY (2.2 ANGSTROMS)</scope>
</reference>
<dbReference type="EC" id="1.14.-.-"/>
<dbReference type="EMBL" id="D30815">
    <property type="protein sequence ID" value="BAA06492.1"/>
    <property type="molecule type" value="Genomic_DNA"/>
</dbReference>
<dbReference type="PIR" id="JC4287">
    <property type="entry name" value="JC4287"/>
</dbReference>
<dbReference type="SMR" id="Q59831"/>
<dbReference type="GO" id="GO:0020037">
    <property type="term" value="F:heme binding"/>
    <property type="evidence" value="ECO:0007669"/>
    <property type="project" value="InterPro"/>
</dbReference>
<dbReference type="GO" id="GO:0005506">
    <property type="term" value="F:iron ion binding"/>
    <property type="evidence" value="ECO:0007669"/>
    <property type="project" value="InterPro"/>
</dbReference>
<dbReference type="GO" id="GO:0004497">
    <property type="term" value="F:monooxygenase activity"/>
    <property type="evidence" value="ECO:0007669"/>
    <property type="project" value="UniProtKB-KW"/>
</dbReference>
<dbReference type="GO" id="GO:0016705">
    <property type="term" value="F:oxidoreductase activity, acting on paired donors, with incorporation or reduction of molecular oxygen"/>
    <property type="evidence" value="ECO:0007669"/>
    <property type="project" value="InterPro"/>
</dbReference>
<dbReference type="CDD" id="cd11030">
    <property type="entry name" value="CYP105-like"/>
    <property type="match status" value="1"/>
</dbReference>
<dbReference type="FunFam" id="1.10.630.10:FF:000018">
    <property type="entry name" value="Cytochrome P450 monooxygenase"/>
    <property type="match status" value="1"/>
</dbReference>
<dbReference type="Gene3D" id="1.10.630.10">
    <property type="entry name" value="Cytochrome P450"/>
    <property type="match status" value="1"/>
</dbReference>
<dbReference type="InterPro" id="IPR001128">
    <property type="entry name" value="Cyt_P450"/>
</dbReference>
<dbReference type="InterPro" id="IPR002397">
    <property type="entry name" value="Cyt_P450_B"/>
</dbReference>
<dbReference type="InterPro" id="IPR017972">
    <property type="entry name" value="Cyt_P450_CS"/>
</dbReference>
<dbReference type="InterPro" id="IPR036396">
    <property type="entry name" value="Cyt_P450_sf"/>
</dbReference>
<dbReference type="PANTHER" id="PTHR46696:SF1">
    <property type="entry name" value="CYTOCHROME P450 YJIB-RELATED"/>
    <property type="match status" value="1"/>
</dbReference>
<dbReference type="PANTHER" id="PTHR46696">
    <property type="entry name" value="P450, PUTATIVE (EUROFUNG)-RELATED"/>
    <property type="match status" value="1"/>
</dbReference>
<dbReference type="Pfam" id="PF00067">
    <property type="entry name" value="p450"/>
    <property type="match status" value="1"/>
</dbReference>
<dbReference type="PRINTS" id="PR00359">
    <property type="entry name" value="BP450"/>
</dbReference>
<dbReference type="PRINTS" id="PR00385">
    <property type="entry name" value="P450"/>
</dbReference>
<dbReference type="SUPFAM" id="SSF48264">
    <property type="entry name" value="Cytochrome P450"/>
    <property type="match status" value="1"/>
</dbReference>
<dbReference type="PROSITE" id="PS00086">
    <property type="entry name" value="CYTOCHROME_P450"/>
    <property type="match status" value="1"/>
</dbReference>
<protein>
    <recommendedName>
        <fullName>Cytochrome P450 105A3</fullName>
        <ecNumber>1.14.-.-</ecNumber>
    </recommendedName>
    <alternativeName>
        <fullName>Cytochrome P450 sca-2</fullName>
        <shortName>CYT P-450sca-2</shortName>
    </alternativeName>
</protein>
<gene>
    <name type="primary">cyp105A3</name>
</gene>
<comment type="function">
    <text evidence="2">Catalyzes the hydroxylation of sodium ML-236B carboxylate to pravastatin.</text>
</comment>
<comment type="cofactor">
    <cofactor evidence="1">
        <name>heme</name>
        <dbReference type="ChEBI" id="CHEBI:30413"/>
    </cofactor>
</comment>
<comment type="subunit">
    <text>Monomer.</text>
</comment>
<comment type="induction">
    <text evidence="2">By sodium ML-236B carboxylate.</text>
</comment>
<comment type="similarity">
    <text evidence="4">Belongs to the cytochrome P450 family.</text>
</comment>
<proteinExistence type="evidence at protein level"/>
<keyword id="KW-0903">Direct protein sequencing</keyword>
<keyword id="KW-0349">Heme</keyword>
<keyword id="KW-0408">Iron</keyword>
<keyword id="KW-0479">Metal-binding</keyword>
<keyword id="KW-0503">Monooxygenase</keyword>
<keyword id="KW-0560">Oxidoreductase</keyword>
<accession>Q59831</accession>
<organism>
    <name type="scientific">Streptomyces carbophilus</name>
    <dbReference type="NCBI Taxonomy" id="44059"/>
    <lineage>
        <taxon>Bacteria</taxon>
        <taxon>Bacillati</taxon>
        <taxon>Actinomycetota</taxon>
        <taxon>Actinomycetes</taxon>
        <taxon>Kitasatosporales</taxon>
        <taxon>Streptomycetaceae</taxon>
        <taxon>Streptomyces</taxon>
    </lineage>
</organism>
<evidence type="ECO:0000250" key="1"/>
<evidence type="ECO:0000269" key="2">
    <source>
    </source>
</evidence>
<evidence type="ECO:0000269" key="3">
    <source>
    </source>
</evidence>
<evidence type="ECO:0000305" key="4"/>
<name>CPS2_STRCC</name>